<accession>Q01347</accession>
<dbReference type="EMBL" id="D10082">
    <property type="protein sequence ID" value="BAA00981.1"/>
    <property type="molecule type" value="Genomic_DNA"/>
</dbReference>
<dbReference type="EMBL" id="X83413">
    <property type="status" value="NOT_ANNOTATED_CDS"/>
    <property type="molecule type" value="Genomic_DNA"/>
</dbReference>
<dbReference type="PIR" id="JQ1653">
    <property type="entry name" value="JQ1653"/>
</dbReference>
<dbReference type="Proteomes" id="UP000009295">
    <property type="component" value="Segment"/>
</dbReference>
<organismHost>
    <name type="scientific">Homo sapiens</name>
    <name type="common">Human</name>
    <dbReference type="NCBI Taxonomy" id="9606"/>
</organismHost>
<organism>
    <name type="scientific">Human herpesvirus 6A (strain Uganda-1102)</name>
    <name type="common">HHV-6 variant A</name>
    <name type="synonym">Human B lymphotropic virus</name>
    <dbReference type="NCBI Taxonomy" id="10370"/>
    <lineage>
        <taxon>Viruses</taxon>
        <taxon>Duplodnaviria</taxon>
        <taxon>Heunggongvirae</taxon>
        <taxon>Peploviricota</taxon>
        <taxon>Herviviricetes</taxon>
        <taxon>Herpesvirales</taxon>
        <taxon>Orthoherpesviridae</taxon>
        <taxon>Betaherpesvirinae</taxon>
        <taxon>Roseolovirus</taxon>
        <taxon>Roseolovirus humanbeta6a</taxon>
        <taxon>Human betaherpesvirus 6A</taxon>
    </lineage>
</organism>
<feature type="chain" id="PRO_0000116318" description="Protein U9">
    <location>
        <begin position="1"/>
        <end position="104"/>
    </location>
</feature>
<name>U9_HHV6U</name>
<reference key="1">
    <citation type="journal article" date="1992" name="J. Gen. Virol.">
        <title>Identification of homologues to the human cytomegalovirus US22 gene family in human herpesvirus 6.</title>
        <authorList>
            <person name="Efstathiou S."/>
            <person name="Lawrence G.L."/>
            <person name="Brown C.M."/>
            <person name="Barrell B.G."/>
        </authorList>
    </citation>
    <scope>NUCLEOTIDE SEQUENCE [GENOMIC DNA]</scope>
</reference>
<reference key="2">
    <citation type="journal article" date="1995" name="Virology">
        <title>The DNA sequence of human herpesvirus-6: structure, coding content, and genome evolution.</title>
        <authorList>
            <person name="Gompels U.A."/>
            <person name="Nicholas J."/>
            <person name="Lawrence G.L."/>
            <person name="Jones M."/>
            <person name="Thomson B.J."/>
            <person name="Martin M.E.D."/>
            <person name="Efstathiou S."/>
            <person name="Craxton M.A."/>
            <person name="Macaulay H.A."/>
        </authorList>
    </citation>
    <scope>NUCLEOTIDE SEQUENCE [LARGE SCALE GENOMIC DNA]</scope>
</reference>
<proteinExistence type="predicted"/>
<gene>
    <name type="primary">U9</name>
    <name type="synonym">SFL2</name>
</gene>
<keyword id="KW-1185">Reference proteome</keyword>
<protein>
    <recommendedName>
        <fullName>Protein U9</fullName>
    </recommendedName>
</protein>
<sequence length="104" mass="11818">MAVRKLWKTVVQLFSKSKSEECNTEAGTMEVSFLKYGVRGLNADCSYVKSQCIKLSECECLYTFASDVCKEDFHNSEEMKVFVVQHSQEMVDGTDLFVHAEESV</sequence>